<proteinExistence type="inferred from homology"/>
<name>PUR7_SHIB3</name>
<organism>
    <name type="scientific">Shigella boydii serotype 18 (strain CDC 3083-94 / BS512)</name>
    <dbReference type="NCBI Taxonomy" id="344609"/>
    <lineage>
        <taxon>Bacteria</taxon>
        <taxon>Pseudomonadati</taxon>
        <taxon>Pseudomonadota</taxon>
        <taxon>Gammaproteobacteria</taxon>
        <taxon>Enterobacterales</taxon>
        <taxon>Enterobacteriaceae</taxon>
        <taxon>Shigella</taxon>
    </lineage>
</organism>
<dbReference type="EC" id="6.3.2.6" evidence="1"/>
<dbReference type="EMBL" id="CP001063">
    <property type="protein sequence ID" value="ACD07979.1"/>
    <property type="molecule type" value="Genomic_DNA"/>
</dbReference>
<dbReference type="RefSeq" id="WP_001295467.1">
    <property type="nucleotide sequence ID" value="NC_010658.1"/>
</dbReference>
<dbReference type="SMR" id="B2TXQ2"/>
<dbReference type="STRING" id="344609.SbBS512_E2848"/>
<dbReference type="GeneID" id="89517285"/>
<dbReference type="KEGG" id="sbc:SbBS512_E2848"/>
<dbReference type="HOGENOM" id="CLU_061495_2_1_6"/>
<dbReference type="UniPathway" id="UPA00074">
    <property type="reaction ID" value="UER00131"/>
</dbReference>
<dbReference type="Proteomes" id="UP000001030">
    <property type="component" value="Chromosome"/>
</dbReference>
<dbReference type="GO" id="GO:0005829">
    <property type="term" value="C:cytosol"/>
    <property type="evidence" value="ECO:0007669"/>
    <property type="project" value="TreeGrafter"/>
</dbReference>
<dbReference type="GO" id="GO:0005524">
    <property type="term" value="F:ATP binding"/>
    <property type="evidence" value="ECO:0007669"/>
    <property type="project" value="UniProtKB-KW"/>
</dbReference>
<dbReference type="GO" id="GO:0004639">
    <property type="term" value="F:phosphoribosylaminoimidazolesuccinocarboxamide synthase activity"/>
    <property type="evidence" value="ECO:0007669"/>
    <property type="project" value="UniProtKB-UniRule"/>
</dbReference>
<dbReference type="GO" id="GO:0006189">
    <property type="term" value="P:'de novo' IMP biosynthetic process"/>
    <property type="evidence" value="ECO:0007669"/>
    <property type="project" value="UniProtKB-UniRule"/>
</dbReference>
<dbReference type="GO" id="GO:0009236">
    <property type="term" value="P:cobalamin biosynthetic process"/>
    <property type="evidence" value="ECO:0007669"/>
    <property type="project" value="InterPro"/>
</dbReference>
<dbReference type="CDD" id="cd01415">
    <property type="entry name" value="SAICAR_synt_PurC"/>
    <property type="match status" value="1"/>
</dbReference>
<dbReference type="FunFam" id="3.30.200.20:FF:000086">
    <property type="entry name" value="Phosphoribosylaminoimidazole-succinocarboxamide synthase"/>
    <property type="match status" value="1"/>
</dbReference>
<dbReference type="FunFam" id="3.30.470.20:FF:000006">
    <property type="entry name" value="Phosphoribosylaminoimidazole-succinocarboxamide synthase"/>
    <property type="match status" value="1"/>
</dbReference>
<dbReference type="Gene3D" id="3.30.470.20">
    <property type="entry name" value="ATP-grasp fold, B domain"/>
    <property type="match status" value="1"/>
</dbReference>
<dbReference type="Gene3D" id="3.30.200.20">
    <property type="entry name" value="Phosphorylase Kinase, domain 1"/>
    <property type="match status" value="1"/>
</dbReference>
<dbReference type="HAMAP" id="MF_00137">
    <property type="entry name" value="SAICAR_synth"/>
    <property type="match status" value="1"/>
</dbReference>
<dbReference type="InterPro" id="IPR028923">
    <property type="entry name" value="SAICAR_synt/ADE2_N"/>
</dbReference>
<dbReference type="InterPro" id="IPR033934">
    <property type="entry name" value="SAICAR_synt_PurC"/>
</dbReference>
<dbReference type="InterPro" id="IPR001636">
    <property type="entry name" value="SAICAR_synth"/>
</dbReference>
<dbReference type="InterPro" id="IPR050089">
    <property type="entry name" value="SAICAR_synthetase"/>
</dbReference>
<dbReference type="InterPro" id="IPR018236">
    <property type="entry name" value="SAICAR_synthetase_CS"/>
</dbReference>
<dbReference type="NCBIfam" id="TIGR00081">
    <property type="entry name" value="purC"/>
    <property type="match status" value="1"/>
</dbReference>
<dbReference type="PANTHER" id="PTHR43599">
    <property type="entry name" value="MULTIFUNCTIONAL PROTEIN ADE2"/>
    <property type="match status" value="1"/>
</dbReference>
<dbReference type="PANTHER" id="PTHR43599:SF3">
    <property type="entry name" value="SI:DKEY-6E2.2"/>
    <property type="match status" value="1"/>
</dbReference>
<dbReference type="Pfam" id="PF01259">
    <property type="entry name" value="SAICAR_synt"/>
    <property type="match status" value="1"/>
</dbReference>
<dbReference type="SUPFAM" id="SSF56104">
    <property type="entry name" value="SAICAR synthase-like"/>
    <property type="match status" value="1"/>
</dbReference>
<dbReference type="PROSITE" id="PS01057">
    <property type="entry name" value="SAICAR_SYNTHETASE_1"/>
    <property type="match status" value="1"/>
</dbReference>
<dbReference type="PROSITE" id="PS01058">
    <property type="entry name" value="SAICAR_SYNTHETASE_2"/>
    <property type="match status" value="1"/>
</dbReference>
<sequence>MQKQAELYRGKAKTVYSTENPDLLVLEFRNDTSAGDGARIEQFDRKGMVNNKFNYFIMSKLAEAGIPTQMERLLSDTECLVKKLDMVPVECVVRNRAAGSLVKRLGIEEGIELNPPLFDLFLKNDAMHDPMVNESYCETFGWVSKENLARMKELTYKANDVLKKLFDDAGLILVDFKLEFGLYKGEVVLGDEFSPDGSRLWDKETLEKMDKDRFRQSLGGLIEAYEAVARRLGVQLD</sequence>
<gene>
    <name evidence="1" type="primary">purC</name>
    <name type="ordered locus">SbBS512_E2848</name>
</gene>
<protein>
    <recommendedName>
        <fullName evidence="1">Phosphoribosylaminoimidazole-succinocarboxamide synthase</fullName>
        <ecNumber evidence="1">6.3.2.6</ecNumber>
    </recommendedName>
    <alternativeName>
        <fullName evidence="1">SAICAR synthetase</fullName>
    </alternativeName>
</protein>
<evidence type="ECO:0000255" key="1">
    <source>
        <dbReference type="HAMAP-Rule" id="MF_00137"/>
    </source>
</evidence>
<reference key="1">
    <citation type="submission" date="2008-05" db="EMBL/GenBank/DDBJ databases">
        <title>Complete sequence of Shigella boydii serotype 18 strain BS512.</title>
        <authorList>
            <person name="Rasko D.A."/>
            <person name="Rosovitz M."/>
            <person name="Maurelli A.T."/>
            <person name="Myers G."/>
            <person name="Seshadri R."/>
            <person name="Cer R."/>
            <person name="Jiang L."/>
            <person name="Ravel J."/>
            <person name="Sebastian Y."/>
        </authorList>
    </citation>
    <scope>NUCLEOTIDE SEQUENCE [LARGE SCALE GENOMIC DNA]</scope>
    <source>
        <strain>CDC 3083-94 / BS512</strain>
    </source>
</reference>
<comment type="catalytic activity">
    <reaction evidence="1">
        <text>5-amino-1-(5-phospho-D-ribosyl)imidazole-4-carboxylate + L-aspartate + ATP = (2S)-2-[5-amino-1-(5-phospho-beta-D-ribosyl)imidazole-4-carboxamido]succinate + ADP + phosphate + 2 H(+)</text>
        <dbReference type="Rhea" id="RHEA:22628"/>
        <dbReference type="ChEBI" id="CHEBI:15378"/>
        <dbReference type="ChEBI" id="CHEBI:29991"/>
        <dbReference type="ChEBI" id="CHEBI:30616"/>
        <dbReference type="ChEBI" id="CHEBI:43474"/>
        <dbReference type="ChEBI" id="CHEBI:58443"/>
        <dbReference type="ChEBI" id="CHEBI:77657"/>
        <dbReference type="ChEBI" id="CHEBI:456216"/>
        <dbReference type="EC" id="6.3.2.6"/>
    </reaction>
</comment>
<comment type="pathway">
    <text evidence="1">Purine metabolism; IMP biosynthesis via de novo pathway; 5-amino-1-(5-phospho-D-ribosyl)imidazole-4-carboxamide from 5-amino-1-(5-phospho-D-ribosyl)imidazole-4-carboxylate: step 1/2.</text>
</comment>
<comment type="similarity">
    <text evidence="1">Belongs to the SAICAR synthetase family.</text>
</comment>
<accession>B2TXQ2</accession>
<feature type="chain" id="PRO_1000096016" description="Phosphoribosylaminoimidazole-succinocarboxamide synthase">
    <location>
        <begin position="1"/>
        <end position="237"/>
    </location>
</feature>
<keyword id="KW-0067">ATP-binding</keyword>
<keyword id="KW-0436">Ligase</keyword>
<keyword id="KW-0547">Nucleotide-binding</keyword>
<keyword id="KW-0658">Purine biosynthesis</keyword>
<keyword id="KW-1185">Reference proteome</keyword>